<dbReference type="EMBL" id="X83413">
    <property type="status" value="NOT_ANNOTATED_CDS"/>
    <property type="molecule type" value="Genomic_DNA"/>
</dbReference>
<dbReference type="Proteomes" id="UP000009295">
    <property type="component" value="Segment"/>
</dbReference>
<organism>
    <name type="scientific">Human herpesvirus 6A (strain Uganda-1102)</name>
    <name type="common">HHV-6 variant A</name>
    <name type="synonym">Human B lymphotropic virus</name>
    <dbReference type="NCBI Taxonomy" id="10370"/>
    <lineage>
        <taxon>Viruses</taxon>
        <taxon>Duplodnaviria</taxon>
        <taxon>Heunggongvirae</taxon>
        <taxon>Peploviricota</taxon>
        <taxon>Herviviricetes</taxon>
        <taxon>Herpesvirales</taxon>
        <taxon>Orthoherpesviridae</taxon>
        <taxon>Betaherpesvirinae</taxon>
        <taxon>Roseolovirus</taxon>
        <taxon>Roseolovirus humanbeta6a</taxon>
        <taxon>Human betaherpesvirus 6A</taxon>
    </lineage>
</organism>
<gene>
    <name type="primary">DR3L</name>
</gene>
<gene>
    <name type="primary">DR3R</name>
</gene>
<reference key="1">
    <citation type="journal article" date="1995" name="Virology">
        <title>The DNA sequence of human herpesvirus-6: structure, coding content, and genome evolution.</title>
        <authorList>
            <person name="Gompels U.A."/>
            <person name="Nicholas J."/>
            <person name="Lawrence G.L."/>
            <person name="Jones M."/>
            <person name="Thomson B.J."/>
            <person name="Martin M.E.D."/>
            <person name="Efstathiou S."/>
            <person name="Craxton M.A."/>
            <person name="Macaulay H.A."/>
        </authorList>
    </citation>
    <scope>NUCLEOTIDE SEQUENCE [LARGE SCALE GENOMIC DNA]</scope>
</reference>
<sequence>MSGVLSCVLRACACAGLCCWVCMGAICGGCQRWWRRRCARWGRVGPRVRSGDGARWVSRKCETERAPSAARSPACSPHFVLVSSSSSSSCSSACSSRPLSSPPSPRAASHAVCAAGGCDLPTHDADGDADEGTDVTLSERAGADEGAGGNAAGCPEDTRGFARSPGDLMGGMNGDLGDEGETGEGGDNGAGE</sequence>
<accession>Q89660</accession>
<protein>
    <recommendedName>
        <fullName>Uncharacterized protein DR3</fullName>
    </recommendedName>
</protein>
<proteinExistence type="inferred from homology"/>
<name>DR3_HHV6U</name>
<feature type="signal peptide" evidence="1">
    <location>
        <begin position="1"/>
        <end position="24"/>
    </location>
</feature>
<feature type="chain" id="PRO_0000342563" description="Uncharacterized protein DR3">
    <location>
        <begin position="25"/>
        <end position="192"/>
    </location>
</feature>
<feature type="region of interest" description="Disordered" evidence="2">
    <location>
        <begin position="140"/>
        <end position="192"/>
    </location>
</feature>
<organismHost>
    <name type="scientific">Homo sapiens</name>
    <name type="common">Human</name>
    <dbReference type="NCBI Taxonomy" id="9606"/>
</organismHost>
<evidence type="ECO:0000255" key="1"/>
<evidence type="ECO:0000256" key="2">
    <source>
        <dbReference type="SAM" id="MobiDB-lite"/>
    </source>
</evidence>
<keyword id="KW-1185">Reference proteome</keyword>
<keyword id="KW-0732">Signal</keyword>